<sequence>MLWTDCLTRLRQELSDNVFAMWIRPLVAEEVEGILRLYAPNPYWTRYIQENHLELISILAEQLSEGRVRQVEILVDSRPGSILSSSEQPATTTAALQTAPIPQPAKVKREPEPVANTAVSSKSSKKKLLNPQFTFSLFVEGRSNQMAAETCRKVLTQLGASQHNPLFLYGPTGLGKTHLMQAVGNALLQAKPNARVMYMTSESFVQDFVSSLQKGKVEEFKKNCRSLDLLLVDDIHLLAGKEASLVEFFYTFNALLDESKQIILTSDRYPKELTELDPRLVSRFSWGLSVGVEPPDIETRIEILLKKAENSGVDLPRNCALFIAQQVVANVRELEGALNKVVAISRFKGAPIDLDVVRESLKDVLAIRARTISVENIQRVVSEYFRIPLKELVGPKRTRIYARPRQLAMGLARELTGDSFPEIGMAFGGRDHSTVMHACEKVVSLREEDPIFDEDYKNLLRLLQS</sequence>
<keyword id="KW-0067">ATP-binding</keyword>
<keyword id="KW-0963">Cytoplasm</keyword>
<keyword id="KW-0235">DNA replication</keyword>
<keyword id="KW-0238">DNA-binding</keyword>
<keyword id="KW-0446">Lipid-binding</keyword>
<keyword id="KW-0547">Nucleotide-binding</keyword>
<accession>B0VAF3</accession>
<reference key="1">
    <citation type="journal article" date="2008" name="PLoS ONE">
        <title>Comparative analysis of Acinetobacters: three genomes for three lifestyles.</title>
        <authorList>
            <person name="Vallenet D."/>
            <person name="Nordmann P."/>
            <person name="Barbe V."/>
            <person name="Poirel L."/>
            <person name="Mangenot S."/>
            <person name="Bataille E."/>
            <person name="Dossat C."/>
            <person name="Gas S."/>
            <person name="Kreimeyer A."/>
            <person name="Lenoble P."/>
            <person name="Oztas S."/>
            <person name="Poulain J."/>
            <person name="Segurens B."/>
            <person name="Robert C."/>
            <person name="Abergel C."/>
            <person name="Claverie J.-M."/>
            <person name="Raoult D."/>
            <person name="Medigue C."/>
            <person name="Weissenbach J."/>
            <person name="Cruveiller S."/>
        </authorList>
    </citation>
    <scope>NUCLEOTIDE SEQUENCE [LARGE SCALE GENOMIC DNA]</scope>
    <source>
        <strain>AYE</strain>
    </source>
</reference>
<protein>
    <recommendedName>
        <fullName evidence="1">Chromosomal replication initiator protein DnaA</fullName>
    </recommendedName>
</protein>
<feature type="chain" id="PRO_1000121941" description="Chromosomal replication initiator protein DnaA">
    <location>
        <begin position="1"/>
        <end position="465"/>
    </location>
</feature>
<feature type="region of interest" description="Domain I, interacts with DnaA modulators" evidence="1">
    <location>
        <begin position="1"/>
        <end position="87"/>
    </location>
</feature>
<feature type="region of interest" description="Disordered" evidence="2">
    <location>
        <begin position="81"/>
        <end position="123"/>
    </location>
</feature>
<feature type="region of interest" description="Domain II" evidence="1">
    <location>
        <begin position="88"/>
        <end position="127"/>
    </location>
</feature>
<feature type="region of interest" description="Domain III, AAA+ region" evidence="1">
    <location>
        <begin position="128"/>
        <end position="345"/>
    </location>
</feature>
<feature type="region of interest" description="Domain IV, binds dsDNA" evidence="1">
    <location>
        <begin position="346"/>
        <end position="465"/>
    </location>
</feature>
<feature type="compositionally biased region" description="Low complexity" evidence="2">
    <location>
        <begin position="88"/>
        <end position="100"/>
    </location>
</feature>
<feature type="binding site" evidence="1">
    <location>
        <position position="173"/>
    </location>
    <ligand>
        <name>ATP</name>
        <dbReference type="ChEBI" id="CHEBI:30616"/>
    </ligand>
</feature>
<feature type="binding site" evidence="1">
    <location>
        <position position="175"/>
    </location>
    <ligand>
        <name>ATP</name>
        <dbReference type="ChEBI" id="CHEBI:30616"/>
    </ligand>
</feature>
<feature type="binding site" evidence="1">
    <location>
        <position position="176"/>
    </location>
    <ligand>
        <name>ATP</name>
        <dbReference type="ChEBI" id="CHEBI:30616"/>
    </ligand>
</feature>
<feature type="binding site" evidence="1">
    <location>
        <position position="177"/>
    </location>
    <ligand>
        <name>ATP</name>
        <dbReference type="ChEBI" id="CHEBI:30616"/>
    </ligand>
</feature>
<name>DNAA_ACIBY</name>
<evidence type="ECO:0000255" key="1">
    <source>
        <dbReference type="HAMAP-Rule" id="MF_00377"/>
    </source>
</evidence>
<evidence type="ECO:0000256" key="2">
    <source>
        <dbReference type="SAM" id="MobiDB-lite"/>
    </source>
</evidence>
<proteinExistence type="inferred from homology"/>
<organism>
    <name type="scientific">Acinetobacter baumannii (strain AYE)</name>
    <dbReference type="NCBI Taxonomy" id="509173"/>
    <lineage>
        <taxon>Bacteria</taxon>
        <taxon>Pseudomonadati</taxon>
        <taxon>Pseudomonadota</taxon>
        <taxon>Gammaproteobacteria</taxon>
        <taxon>Moraxellales</taxon>
        <taxon>Moraxellaceae</taxon>
        <taxon>Acinetobacter</taxon>
        <taxon>Acinetobacter calcoaceticus/baumannii complex</taxon>
    </lineage>
</organism>
<gene>
    <name evidence="1" type="primary">dnaA</name>
    <name type="ordered locus">ABAYE0001</name>
</gene>
<comment type="function">
    <text evidence="1">Plays an essential role in the initiation and regulation of chromosomal replication. ATP-DnaA binds to the origin of replication (oriC) to initiate formation of the DNA replication initiation complex once per cell cycle. Binds the DnaA box (a 9 base pair repeat at the origin) and separates the double-stranded (ds)DNA. Forms a right-handed helical filament on oriC DNA; dsDNA binds to the exterior of the filament while single-stranded (ss)DNA is stabiized in the filament's interior. The ATP-DnaA-oriC complex binds and stabilizes one strand of the AT-rich DNA unwinding element (DUE), permitting loading of DNA polymerase. After initiation quickly degrades to an ADP-DnaA complex that is not apt for DNA replication. Binds acidic phospholipids.</text>
</comment>
<comment type="subunit">
    <text evidence="1">Oligomerizes as a right-handed, spiral filament on DNA at oriC.</text>
</comment>
<comment type="subcellular location">
    <subcellularLocation>
        <location evidence="1">Cytoplasm</location>
    </subcellularLocation>
</comment>
<comment type="domain">
    <text evidence="1">Domain I is involved in oligomerization and binding regulators, domain II is flexibile and of varying length in different bacteria, domain III forms the AAA+ region, while domain IV binds dsDNA.</text>
</comment>
<comment type="similarity">
    <text evidence="1">Belongs to the DnaA family.</text>
</comment>
<dbReference type="EMBL" id="CU459141">
    <property type="protein sequence ID" value="CAM84993.1"/>
    <property type="molecule type" value="Genomic_DNA"/>
</dbReference>
<dbReference type="RefSeq" id="WP_000964768.1">
    <property type="nucleotide sequence ID" value="NZ_JBDGFB010000009.1"/>
</dbReference>
<dbReference type="SMR" id="B0VAF3"/>
<dbReference type="EnsemblBacteria" id="CAM84993">
    <property type="protein sequence ID" value="CAM84993"/>
    <property type="gene ID" value="ABAYE0001"/>
</dbReference>
<dbReference type="GeneID" id="92891940"/>
<dbReference type="KEGG" id="aby:ABAYE0001"/>
<dbReference type="HOGENOM" id="CLU_026910_0_1_6"/>
<dbReference type="GO" id="GO:0005737">
    <property type="term" value="C:cytoplasm"/>
    <property type="evidence" value="ECO:0007669"/>
    <property type="project" value="UniProtKB-SubCell"/>
</dbReference>
<dbReference type="GO" id="GO:0005886">
    <property type="term" value="C:plasma membrane"/>
    <property type="evidence" value="ECO:0007669"/>
    <property type="project" value="TreeGrafter"/>
</dbReference>
<dbReference type="GO" id="GO:0005524">
    <property type="term" value="F:ATP binding"/>
    <property type="evidence" value="ECO:0007669"/>
    <property type="project" value="UniProtKB-UniRule"/>
</dbReference>
<dbReference type="GO" id="GO:0016887">
    <property type="term" value="F:ATP hydrolysis activity"/>
    <property type="evidence" value="ECO:0007669"/>
    <property type="project" value="InterPro"/>
</dbReference>
<dbReference type="GO" id="GO:0003688">
    <property type="term" value="F:DNA replication origin binding"/>
    <property type="evidence" value="ECO:0007669"/>
    <property type="project" value="UniProtKB-UniRule"/>
</dbReference>
<dbReference type="GO" id="GO:0008289">
    <property type="term" value="F:lipid binding"/>
    <property type="evidence" value="ECO:0007669"/>
    <property type="project" value="UniProtKB-KW"/>
</dbReference>
<dbReference type="GO" id="GO:0006270">
    <property type="term" value="P:DNA replication initiation"/>
    <property type="evidence" value="ECO:0007669"/>
    <property type="project" value="UniProtKB-UniRule"/>
</dbReference>
<dbReference type="GO" id="GO:0006275">
    <property type="term" value="P:regulation of DNA replication"/>
    <property type="evidence" value="ECO:0007669"/>
    <property type="project" value="UniProtKB-UniRule"/>
</dbReference>
<dbReference type="CDD" id="cd00009">
    <property type="entry name" value="AAA"/>
    <property type="match status" value="1"/>
</dbReference>
<dbReference type="CDD" id="cd06571">
    <property type="entry name" value="Bac_DnaA_C"/>
    <property type="match status" value="1"/>
</dbReference>
<dbReference type="FunFam" id="1.10.8.60:FF:000003">
    <property type="entry name" value="Chromosomal replication initiator protein DnaA"/>
    <property type="match status" value="1"/>
</dbReference>
<dbReference type="FunFam" id="3.40.50.300:FF:000668">
    <property type="entry name" value="Chromosomal replication initiator protein DnaA"/>
    <property type="match status" value="1"/>
</dbReference>
<dbReference type="Gene3D" id="1.10.1750.10">
    <property type="match status" value="1"/>
</dbReference>
<dbReference type="Gene3D" id="1.10.8.60">
    <property type="match status" value="1"/>
</dbReference>
<dbReference type="Gene3D" id="3.30.300.180">
    <property type="match status" value="1"/>
</dbReference>
<dbReference type="Gene3D" id="3.40.50.300">
    <property type="entry name" value="P-loop containing nucleotide triphosphate hydrolases"/>
    <property type="match status" value="1"/>
</dbReference>
<dbReference type="HAMAP" id="MF_00377">
    <property type="entry name" value="DnaA_bact"/>
    <property type="match status" value="1"/>
</dbReference>
<dbReference type="InterPro" id="IPR003593">
    <property type="entry name" value="AAA+_ATPase"/>
</dbReference>
<dbReference type="InterPro" id="IPR001957">
    <property type="entry name" value="Chromosome_initiator_DnaA"/>
</dbReference>
<dbReference type="InterPro" id="IPR020591">
    <property type="entry name" value="Chromosome_initiator_DnaA-like"/>
</dbReference>
<dbReference type="InterPro" id="IPR018312">
    <property type="entry name" value="Chromosome_initiator_DnaA_CS"/>
</dbReference>
<dbReference type="InterPro" id="IPR013159">
    <property type="entry name" value="DnaA_C"/>
</dbReference>
<dbReference type="InterPro" id="IPR013317">
    <property type="entry name" value="DnaA_dom"/>
</dbReference>
<dbReference type="InterPro" id="IPR024633">
    <property type="entry name" value="DnaA_N_dom"/>
</dbReference>
<dbReference type="InterPro" id="IPR038454">
    <property type="entry name" value="DnaA_N_sf"/>
</dbReference>
<dbReference type="InterPro" id="IPR027417">
    <property type="entry name" value="P-loop_NTPase"/>
</dbReference>
<dbReference type="InterPro" id="IPR010921">
    <property type="entry name" value="Trp_repressor/repl_initiator"/>
</dbReference>
<dbReference type="NCBIfam" id="TIGR00362">
    <property type="entry name" value="DnaA"/>
    <property type="match status" value="1"/>
</dbReference>
<dbReference type="PANTHER" id="PTHR30050">
    <property type="entry name" value="CHROMOSOMAL REPLICATION INITIATOR PROTEIN DNAA"/>
    <property type="match status" value="1"/>
</dbReference>
<dbReference type="PANTHER" id="PTHR30050:SF2">
    <property type="entry name" value="CHROMOSOMAL REPLICATION INITIATOR PROTEIN DNAA"/>
    <property type="match status" value="1"/>
</dbReference>
<dbReference type="Pfam" id="PF00308">
    <property type="entry name" value="Bac_DnaA"/>
    <property type="match status" value="1"/>
</dbReference>
<dbReference type="Pfam" id="PF08299">
    <property type="entry name" value="Bac_DnaA_C"/>
    <property type="match status" value="1"/>
</dbReference>
<dbReference type="Pfam" id="PF11638">
    <property type="entry name" value="DnaA_N"/>
    <property type="match status" value="1"/>
</dbReference>
<dbReference type="PRINTS" id="PR00051">
    <property type="entry name" value="DNAA"/>
</dbReference>
<dbReference type="SMART" id="SM00382">
    <property type="entry name" value="AAA"/>
    <property type="match status" value="1"/>
</dbReference>
<dbReference type="SMART" id="SM00760">
    <property type="entry name" value="Bac_DnaA_C"/>
    <property type="match status" value="1"/>
</dbReference>
<dbReference type="SUPFAM" id="SSF52540">
    <property type="entry name" value="P-loop containing nucleoside triphosphate hydrolases"/>
    <property type="match status" value="1"/>
</dbReference>
<dbReference type="SUPFAM" id="SSF48295">
    <property type="entry name" value="TrpR-like"/>
    <property type="match status" value="1"/>
</dbReference>
<dbReference type="PROSITE" id="PS01008">
    <property type="entry name" value="DNAA"/>
    <property type="match status" value="1"/>
</dbReference>